<feature type="chain" id="PRO_0000264287" description="Protein-glutamate methylesterase/protein-glutamine glutaminase 2">
    <location>
        <begin position="1"/>
        <end position="352"/>
    </location>
</feature>
<feature type="domain" description="Response regulatory" evidence="1">
    <location>
        <begin position="6"/>
        <end position="124"/>
    </location>
</feature>
<feature type="domain" description="CheB-type methylesterase" evidence="1">
    <location>
        <begin position="162"/>
        <end position="343"/>
    </location>
</feature>
<feature type="active site" evidence="1">
    <location>
        <position position="173"/>
    </location>
</feature>
<feature type="active site" evidence="1">
    <location>
        <position position="200"/>
    </location>
</feature>
<feature type="active site" evidence="1">
    <location>
        <position position="292"/>
    </location>
</feature>
<feature type="modified residue" description="4-aspartylphosphate" evidence="1">
    <location>
        <position position="57"/>
    </location>
</feature>
<sequence>MRKKIKVLIVEDSLVVRELLKHIIGSDERFEVMAAVTSAEDCLEMLETQQPDVISLDIRLPGMNGLDATLKIMSRRPTPIVVVAAQVDDNELNIAMNALRAGALSVVEKPVGVTNAGYDTMAAKICTQLAIMSQVQVVRQGINRGLNFGSDDTPARVSQGRPGTYSMVGIVASTGGPQALVQLLGGLGADFPLPILLVQHITSSFLEGFVTWLSGTTPFEARIAQDGEKPVAGKVYVAPVDHHLGLVNDQLVILDLPAVCNQKPSGTVLFGSMARDIGKHGIGVVLTGMGADGSEGLRQMADKGAYTIVEDASTCVVNGMPAAAAKLGAARETLPLPAIAARLRDLALGGEK</sequence>
<keyword id="KW-0145">Chemotaxis</keyword>
<keyword id="KW-0963">Cytoplasm</keyword>
<keyword id="KW-0378">Hydrolase</keyword>
<keyword id="KW-0597">Phosphoprotein</keyword>
<evidence type="ECO:0000255" key="1">
    <source>
        <dbReference type="HAMAP-Rule" id="MF_00099"/>
    </source>
</evidence>
<name>CHEB2_PARM1</name>
<accession>Q2W5V5</accession>
<proteinExistence type="inferred from homology"/>
<gene>
    <name evidence="1" type="primary">cheB2</name>
    <name type="ordered locus">amb1966</name>
</gene>
<reference key="1">
    <citation type="journal article" date="2005" name="DNA Res.">
        <title>Complete genome sequence of the facultative anaerobic magnetotactic bacterium Magnetospirillum sp. strain AMB-1.</title>
        <authorList>
            <person name="Matsunaga T."/>
            <person name="Okamura Y."/>
            <person name="Fukuda Y."/>
            <person name="Wahyudi A.T."/>
            <person name="Murase Y."/>
            <person name="Takeyama H."/>
        </authorList>
    </citation>
    <scope>NUCLEOTIDE SEQUENCE [LARGE SCALE GENOMIC DNA]</scope>
    <source>
        <strain>ATCC 700264 / AMB-1</strain>
    </source>
</reference>
<comment type="function">
    <text evidence="1">Involved in chemotaxis. Part of a chemotaxis signal transduction system that modulates chemotaxis in response to various stimuli. Catalyzes the demethylation of specific methylglutamate residues introduced into the chemoreceptors (methyl-accepting chemotaxis proteins or MCP) by CheR. Also mediates the irreversible deamidation of specific glutamine residues to glutamic acid.</text>
</comment>
<comment type="catalytic activity">
    <reaction evidence="1">
        <text>[protein]-L-glutamate 5-O-methyl ester + H2O = L-glutamyl-[protein] + methanol + H(+)</text>
        <dbReference type="Rhea" id="RHEA:23236"/>
        <dbReference type="Rhea" id="RHEA-COMP:10208"/>
        <dbReference type="Rhea" id="RHEA-COMP:10311"/>
        <dbReference type="ChEBI" id="CHEBI:15377"/>
        <dbReference type="ChEBI" id="CHEBI:15378"/>
        <dbReference type="ChEBI" id="CHEBI:17790"/>
        <dbReference type="ChEBI" id="CHEBI:29973"/>
        <dbReference type="ChEBI" id="CHEBI:82795"/>
        <dbReference type="EC" id="3.1.1.61"/>
    </reaction>
</comment>
<comment type="catalytic activity">
    <reaction evidence="1">
        <text>L-glutaminyl-[protein] + H2O = L-glutamyl-[protein] + NH4(+)</text>
        <dbReference type="Rhea" id="RHEA:16441"/>
        <dbReference type="Rhea" id="RHEA-COMP:10207"/>
        <dbReference type="Rhea" id="RHEA-COMP:10208"/>
        <dbReference type="ChEBI" id="CHEBI:15377"/>
        <dbReference type="ChEBI" id="CHEBI:28938"/>
        <dbReference type="ChEBI" id="CHEBI:29973"/>
        <dbReference type="ChEBI" id="CHEBI:30011"/>
        <dbReference type="EC" id="3.5.1.44"/>
    </reaction>
</comment>
<comment type="subcellular location">
    <subcellularLocation>
        <location evidence="1">Cytoplasm</location>
    </subcellularLocation>
</comment>
<comment type="domain">
    <text evidence="1">Contains a C-terminal catalytic domain, and an N-terminal region which modulates catalytic activity.</text>
</comment>
<comment type="PTM">
    <text evidence="1">Phosphorylated by CheA. Phosphorylation of the N-terminal regulatory domain activates the methylesterase activity.</text>
</comment>
<comment type="similarity">
    <text evidence="1">Belongs to the CheB family.</text>
</comment>
<dbReference type="EC" id="3.1.1.61" evidence="1"/>
<dbReference type="EC" id="3.5.1.44" evidence="1"/>
<dbReference type="EMBL" id="AP007255">
    <property type="protein sequence ID" value="BAE50770.1"/>
    <property type="molecule type" value="Genomic_DNA"/>
</dbReference>
<dbReference type="RefSeq" id="WP_011384369.1">
    <property type="nucleotide sequence ID" value="NC_007626.1"/>
</dbReference>
<dbReference type="SMR" id="Q2W5V5"/>
<dbReference type="STRING" id="342108.amb1966"/>
<dbReference type="KEGG" id="mag:amb1966"/>
<dbReference type="HOGENOM" id="CLU_000445_51_0_5"/>
<dbReference type="OrthoDB" id="9793421at2"/>
<dbReference type="Proteomes" id="UP000007058">
    <property type="component" value="Chromosome"/>
</dbReference>
<dbReference type="GO" id="GO:0005737">
    <property type="term" value="C:cytoplasm"/>
    <property type="evidence" value="ECO:0007669"/>
    <property type="project" value="UniProtKB-SubCell"/>
</dbReference>
<dbReference type="GO" id="GO:0000156">
    <property type="term" value="F:phosphorelay response regulator activity"/>
    <property type="evidence" value="ECO:0007669"/>
    <property type="project" value="InterPro"/>
</dbReference>
<dbReference type="GO" id="GO:0008984">
    <property type="term" value="F:protein-glutamate methylesterase activity"/>
    <property type="evidence" value="ECO:0007669"/>
    <property type="project" value="UniProtKB-UniRule"/>
</dbReference>
<dbReference type="GO" id="GO:0050568">
    <property type="term" value="F:protein-glutamine glutaminase activity"/>
    <property type="evidence" value="ECO:0007669"/>
    <property type="project" value="UniProtKB-UniRule"/>
</dbReference>
<dbReference type="GO" id="GO:0006935">
    <property type="term" value="P:chemotaxis"/>
    <property type="evidence" value="ECO:0007669"/>
    <property type="project" value="UniProtKB-UniRule"/>
</dbReference>
<dbReference type="CDD" id="cd16432">
    <property type="entry name" value="CheB_Rec"/>
    <property type="match status" value="1"/>
</dbReference>
<dbReference type="CDD" id="cd17541">
    <property type="entry name" value="REC_CheB-like"/>
    <property type="match status" value="1"/>
</dbReference>
<dbReference type="Gene3D" id="3.40.50.2300">
    <property type="match status" value="1"/>
</dbReference>
<dbReference type="Gene3D" id="3.40.50.180">
    <property type="entry name" value="Methylesterase CheB, C-terminal domain"/>
    <property type="match status" value="1"/>
</dbReference>
<dbReference type="HAMAP" id="MF_00099">
    <property type="entry name" value="CheB_chemtxs"/>
    <property type="match status" value="1"/>
</dbReference>
<dbReference type="InterPro" id="IPR008248">
    <property type="entry name" value="CheB-like"/>
</dbReference>
<dbReference type="InterPro" id="IPR035909">
    <property type="entry name" value="CheB_C"/>
</dbReference>
<dbReference type="InterPro" id="IPR011006">
    <property type="entry name" value="CheY-like_superfamily"/>
</dbReference>
<dbReference type="InterPro" id="IPR000673">
    <property type="entry name" value="Sig_transdc_resp-reg_Me-estase"/>
</dbReference>
<dbReference type="InterPro" id="IPR001789">
    <property type="entry name" value="Sig_transdc_resp-reg_receiver"/>
</dbReference>
<dbReference type="PANTHER" id="PTHR42872">
    <property type="entry name" value="PROTEIN-GLUTAMATE METHYLESTERASE/PROTEIN-GLUTAMINE GLUTAMINASE"/>
    <property type="match status" value="1"/>
</dbReference>
<dbReference type="PANTHER" id="PTHR42872:SF6">
    <property type="entry name" value="PROTEIN-GLUTAMATE METHYLESTERASE_PROTEIN-GLUTAMINE GLUTAMINASE"/>
    <property type="match status" value="1"/>
</dbReference>
<dbReference type="Pfam" id="PF01339">
    <property type="entry name" value="CheB_methylest"/>
    <property type="match status" value="1"/>
</dbReference>
<dbReference type="Pfam" id="PF00072">
    <property type="entry name" value="Response_reg"/>
    <property type="match status" value="1"/>
</dbReference>
<dbReference type="PIRSF" id="PIRSF000876">
    <property type="entry name" value="RR_chemtxs_CheB"/>
    <property type="match status" value="1"/>
</dbReference>
<dbReference type="SMART" id="SM00448">
    <property type="entry name" value="REC"/>
    <property type="match status" value="1"/>
</dbReference>
<dbReference type="SUPFAM" id="SSF52172">
    <property type="entry name" value="CheY-like"/>
    <property type="match status" value="1"/>
</dbReference>
<dbReference type="SUPFAM" id="SSF52738">
    <property type="entry name" value="Methylesterase CheB, C-terminal domain"/>
    <property type="match status" value="1"/>
</dbReference>
<dbReference type="PROSITE" id="PS50122">
    <property type="entry name" value="CHEB"/>
    <property type="match status" value="1"/>
</dbReference>
<dbReference type="PROSITE" id="PS50110">
    <property type="entry name" value="RESPONSE_REGULATORY"/>
    <property type="match status" value="1"/>
</dbReference>
<organism>
    <name type="scientific">Paramagnetospirillum magneticum (strain ATCC 700264 / AMB-1)</name>
    <name type="common">Magnetospirillum magneticum</name>
    <dbReference type="NCBI Taxonomy" id="342108"/>
    <lineage>
        <taxon>Bacteria</taxon>
        <taxon>Pseudomonadati</taxon>
        <taxon>Pseudomonadota</taxon>
        <taxon>Alphaproteobacteria</taxon>
        <taxon>Rhodospirillales</taxon>
        <taxon>Magnetospirillaceae</taxon>
        <taxon>Paramagnetospirillum</taxon>
    </lineage>
</organism>
<protein>
    <recommendedName>
        <fullName evidence="1">Protein-glutamate methylesterase/protein-glutamine glutaminase 2</fullName>
        <ecNumber evidence="1">3.1.1.61</ecNumber>
        <ecNumber evidence="1">3.5.1.44</ecNumber>
    </recommendedName>
</protein>